<dbReference type="EC" id="3.1.26.3"/>
<dbReference type="EMBL" id="AE015450">
    <property type="protein sequence ID" value="AAP56843.2"/>
    <property type="molecule type" value="Genomic_DNA"/>
</dbReference>
<dbReference type="RefSeq" id="WP_011113742.1">
    <property type="nucleotide sequence ID" value="NC_004829.2"/>
</dbReference>
<dbReference type="SMR" id="Q7NAZ2"/>
<dbReference type="KEGG" id="mga:MGA_0180"/>
<dbReference type="HOGENOM" id="CLU_418462_0_0_14"/>
<dbReference type="OrthoDB" id="9805026at2"/>
<dbReference type="Proteomes" id="UP000001418">
    <property type="component" value="Chromosome"/>
</dbReference>
<dbReference type="GO" id="GO:0005737">
    <property type="term" value="C:cytoplasm"/>
    <property type="evidence" value="ECO:0007669"/>
    <property type="project" value="UniProtKB-SubCell"/>
</dbReference>
<dbReference type="GO" id="GO:0046872">
    <property type="term" value="F:metal ion binding"/>
    <property type="evidence" value="ECO:0007669"/>
    <property type="project" value="UniProtKB-KW"/>
</dbReference>
<dbReference type="GO" id="GO:0004525">
    <property type="term" value="F:ribonuclease III activity"/>
    <property type="evidence" value="ECO:0007669"/>
    <property type="project" value="UniProtKB-UniRule"/>
</dbReference>
<dbReference type="GO" id="GO:0019843">
    <property type="term" value="F:rRNA binding"/>
    <property type="evidence" value="ECO:0007669"/>
    <property type="project" value="UniProtKB-KW"/>
</dbReference>
<dbReference type="GO" id="GO:0006397">
    <property type="term" value="P:mRNA processing"/>
    <property type="evidence" value="ECO:0007669"/>
    <property type="project" value="UniProtKB-UniRule"/>
</dbReference>
<dbReference type="GO" id="GO:0006364">
    <property type="term" value="P:rRNA processing"/>
    <property type="evidence" value="ECO:0007669"/>
    <property type="project" value="UniProtKB-UniRule"/>
</dbReference>
<dbReference type="GO" id="GO:0008033">
    <property type="term" value="P:tRNA processing"/>
    <property type="evidence" value="ECO:0007669"/>
    <property type="project" value="UniProtKB-KW"/>
</dbReference>
<dbReference type="CDD" id="cd00593">
    <property type="entry name" value="RIBOc"/>
    <property type="match status" value="1"/>
</dbReference>
<dbReference type="Gene3D" id="1.10.1520.10">
    <property type="entry name" value="Ribonuclease III domain"/>
    <property type="match status" value="1"/>
</dbReference>
<dbReference type="HAMAP" id="MF_00104">
    <property type="entry name" value="RNase_III"/>
    <property type="match status" value="1"/>
</dbReference>
<dbReference type="InterPro" id="IPR014720">
    <property type="entry name" value="dsRBD_dom"/>
</dbReference>
<dbReference type="InterPro" id="IPR011907">
    <property type="entry name" value="RNase_III"/>
</dbReference>
<dbReference type="InterPro" id="IPR000999">
    <property type="entry name" value="RNase_III_dom"/>
</dbReference>
<dbReference type="InterPro" id="IPR036389">
    <property type="entry name" value="RNase_III_sf"/>
</dbReference>
<dbReference type="NCBIfam" id="TIGR02191">
    <property type="entry name" value="RNaseIII"/>
    <property type="match status" value="1"/>
</dbReference>
<dbReference type="PANTHER" id="PTHR14950">
    <property type="entry name" value="DICER-RELATED"/>
    <property type="match status" value="1"/>
</dbReference>
<dbReference type="PANTHER" id="PTHR14950:SF37">
    <property type="entry name" value="ENDORIBONUCLEASE DICER"/>
    <property type="match status" value="1"/>
</dbReference>
<dbReference type="Pfam" id="PF00035">
    <property type="entry name" value="dsrm"/>
    <property type="match status" value="1"/>
</dbReference>
<dbReference type="Pfam" id="PF14622">
    <property type="entry name" value="Ribonucleas_3_3"/>
    <property type="match status" value="1"/>
</dbReference>
<dbReference type="SMART" id="SM00535">
    <property type="entry name" value="RIBOc"/>
    <property type="match status" value="1"/>
</dbReference>
<dbReference type="SUPFAM" id="SSF54768">
    <property type="entry name" value="dsRNA-binding domain-like"/>
    <property type="match status" value="1"/>
</dbReference>
<dbReference type="SUPFAM" id="SSF69065">
    <property type="entry name" value="RNase III domain-like"/>
    <property type="match status" value="1"/>
</dbReference>
<dbReference type="PROSITE" id="PS00517">
    <property type="entry name" value="RNASE_3_1"/>
    <property type="match status" value="1"/>
</dbReference>
<dbReference type="PROSITE" id="PS50142">
    <property type="entry name" value="RNASE_3_2"/>
    <property type="match status" value="1"/>
</dbReference>
<reference key="1">
    <citation type="journal article" date="2003" name="Microbiology">
        <title>The complete genome sequence of the avian pathogen Mycoplasma gallisepticum strain R(low).</title>
        <authorList>
            <person name="Papazisi L."/>
            <person name="Gorton T.S."/>
            <person name="Kutish G."/>
            <person name="Markham P.F."/>
            <person name="Browning G.F."/>
            <person name="Nguyen D.K."/>
            <person name="Swartzell S."/>
            <person name="Madan A."/>
            <person name="Mahairas G."/>
            <person name="Geary S.J."/>
        </authorList>
    </citation>
    <scope>NUCLEOTIDE SEQUENCE [LARGE SCALE GENOMIC DNA]</scope>
    <source>
        <strain>R(low / passage 15 / clone 2)</strain>
    </source>
</reference>
<protein>
    <recommendedName>
        <fullName>Ribonuclease 3</fullName>
        <ecNumber>3.1.26.3</ecNumber>
    </recommendedName>
    <alternativeName>
        <fullName>Ribonuclease III</fullName>
        <shortName>RNase III</shortName>
    </alternativeName>
</protein>
<keyword id="KW-0963">Cytoplasm</keyword>
<keyword id="KW-0255">Endonuclease</keyword>
<keyword id="KW-0378">Hydrolase</keyword>
<keyword id="KW-0460">Magnesium</keyword>
<keyword id="KW-0479">Metal-binding</keyword>
<keyword id="KW-0507">mRNA processing</keyword>
<keyword id="KW-0540">Nuclease</keyword>
<keyword id="KW-1185">Reference proteome</keyword>
<keyword id="KW-0694">RNA-binding</keyword>
<keyword id="KW-0698">rRNA processing</keyword>
<keyword id="KW-0699">rRNA-binding</keyword>
<keyword id="KW-0819">tRNA processing</keyword>
<gene>
    <name type="primary">rnc</name>
    <name type="ordered locus">MYCGA4930</name>
    <name type="ORF">MGA_0180</name>
</gene>
<sequence>MENLEKNTKKKIKKPNNFKKNNKDKTEELKDKPTPRMFKMTPKSSKFLHQLGVTGRKHTEKPVPLNDPDYEKKIREIQAKEAKKIRSDEVVNNNSKKQNNNKQAKKKANKNKKQKGNNNNFQNNKKPENWKQKPAANNQVKAIPNSEKSTAKTAINLIIKRTFETLKQNNLIAPNLKQNPNKKDKPQQPNVAAKNNNQKEVKKPYNNFVNNQKNHNKNNAGNKGDNKQPTKPLNQSKLSKSTIVELPFTPNFTSNQPKPTQKEDSKKVKAKKAENSQPQESNKQVKKLEVKTNQQKQDQTKKKQPKENKNQQIKAVNLNNNQQKTNNNNQKNSVDKSENDNNKKKSEANQKQENLNPNNNNKKKEDSKNESNNIPLINKNISDQQIVKISNYIKDNYPVIYADLKEKNRLGFNSNLDDDKLIVYANYEAKDLELLLKKFKVVTNNIGLYEEALTHNSYANEMHLKYNYQRLEFLGDAIINKIVAEYLFNHSDSSEGEMTKDRIKIIQSNTLIKAATQLELINYIRVGEGLKIAPLSPKILEDIFEAFIGAMYLDQGEYAVRKILNDTIIGYYQKGQLTENTDYKSIFQEIIHSTGLNMKIHYERTYDRQKNLHTVSLYAGGIMYGEGKDSSTHKAEIKAAKEAISKFRGLLKLEK</sequence>
<organism>
    <name type="scientific">Mycoplasmoides gallisepticum (strain R(low / passage 15 / clone 2))</name>
    <name type="common">Mycoplasma gallisepticum</name>
    <dbReference type="NCBI Taxonomy" id="710127"/>
    <lineage>
        <taxon>Bacteria</taxon>
        <taxon>Bacillati</taxon>
        <taxon>Mycoplasmatota</taxon>
        <taxon>Mycoplasmoidales</taxon>
        <taxon>Mycoplasmoidaceae</taxon>
        <taxon>Mycoplasmoides</taxon>
    </lineage>
</organism>
<evidence type="ECO:0000250" key="1"/>
<evidence type="ECO:0000255" key="2"/>
<evidence type="ECO:0000256" key="3">
    <source>
        <dbReference type="SAM" id="MobiDB-lite"/>
    </source>
</evidence>
<evidence type="ECO:0000305" key="4"/>
<name>RNC_MYCGA</name>
<accession>Q7NAZ2</accession>
<feature type="chain" id="PRO_0000416608" description="Ribonuclease 3">
    <location>
        <begin position="1"/>
        <end position="655"/>
    </location>
</feature>
<feature type="domain" description="RNase III">
    <location>
        <begin position="432"/>
        <end position="556"/>
    </location>
</feature>
<feature type="domain" description="DRBM">
    <location>
        <begin position="582"/>
        <end position="649"/>
    </location>
</feature>
<feature type="region of interest" description="Unknown">
    <location>
        <begin position="1"/>
        <end position="400"/>
    </location>
</feature>
<feature type="region of interest" description="Disordered" evidence="3">
    <location>
        <begin position="1"/>
        <end position="148"/>
    </location>
</feature>
<feature type="region of interest" description="Disordered" evidence="3">
    <location>
        <begin position="171"/>
        <end position="376"/>
    </location>
</feature>
<feature type="region of interest" description="RNase 3">
    <location>
        <begin position="401"/>
        <end position="655"/>
    </location>
</feature>
<feature type="compositionally biased region" description="Basic residues" evidence="3">
    <location>
        <begin position="8"/>
        <end position="20"/>
    </location>
</feature>
<feature type="compositionally biased region" description="Basic and acidic residues" evidence="3">
    <location>
        <begin position="21"/>
        <end position="34"/>
    </location>
</feature>
<feature type="compositionally biased region" description="Basic and acidic residues" evidence="3">
    <location>
        <begin position="69"/>
        <end position="89"/>
    </location>
</feature>
<feature type="compositionally biased region" description="Low complexity" evidence="3">
    <location>
        <begin position="92"/>
        <end position="102"/>
    </location>
</feature>
<feature type="compositionally biased region" description="Basic residues" evidence="3">
    <location>
        <begin position="103"/>
        <end position="115"/>
    </location>
</feature>
<feature type="compositionally biased region" description="Polar residues" evidence="3">
    <location>
        <begin position="135"/>
        <end position="148"/>
    </location>
</feature>
<feature type="compositionally biased region" description="Low complexity" evidence="3">
    <location>
        <begin position="206"/>
        <end position="223"/>
    </location>
</feature>
<feature type="compositionally biased region" description="Polar residues" evidence="3">
    <location>
        <begin position="229"/>
        <end position="242"/>
    </location>
</feature>
<feature type="compositionally biased region" description="Polar residues" evidence="3">
    <location>
        <begin position="250"/>
        <end position="259"/>
    </location>
</feature>
<feature type="compositionally biased region" description="Basic and acidic residues" evidence="3">
    <location>
        <begin position="260"/>
        <end position="274"/>
    </location>
</feature>
<feature type="compositionally biased region" description="Basic and acidic residues" evidence="3">
    <location>
        <begin position="298"/>
        <end position="309"/>
    </location>
</feature>
<feature type="compositionally biased region" description="Low complexity" evidence="3">
    <location>
        <begin position="310"/>
        <end position="332"/>
    </location>
</feature>
<feature type="compositionally biased region" description="Basic and acidic residues" evidence="3">
    <location>
        <begin position="333"/>
        <end position="350"/>
    </location>
</feature>
<feature type="compositionally biased region" description="Low complexity" evidence="3">
    <location>
        <begin position="351"/>
        <end position="360"/>
    </location>
</feature>
<feature type="active site" evidence="2">
    <location>
        <position position="476"/>
    </location>
</feature>
<feature type="active site" evidence="1">
    <location>
        <position position="545"/>
    </location>
</feature>
<feature type="binding site" evidence="1">
    <location>
        <position position="472"/>
    </location>
    <ligand>
        <name>Mg(2+)</name>
        <dbReference type="ChEBI" id="CHEBI:18420"/>
    </ligand>
</feature>
<feature type="binding site" evidence="1">
    <location>
        <position position="542"/>
    </location>
    <ligand>
        <name>Mg(2+)</name>
        <dbReference type="ChEBI" id="CHEBI:18420"/>
    </ligand>
</feature>
<feature type="binding site" evidence="1">
    <location>
        <position position="545"/>
    </location>
    <ligand>
        <name>Mg(2+)</name>
        <dbReference type="ChEBI" id="CHEBI:18420"/>
    </ligand>
</feature>
<proteinExistence type="inferred from homology"/>
<comment type="function">
    <text evidence="1">Digests double-stranded RNA. Involved in the processing of primary rRNA transcript to yield the immediate precursors to the large and small rRNAs (23S and 16S). Processes some mRNAs, and tRNAs when they are encoded in the rRNA operon. Processes pre-crRNA and tracrRNA of type II CRISPR loci if present in the organism (By similarity).</text>
</comment>
<comment type="catalytic activity">
    <reaction>
        <text>Endonucleolytic cleavage to 5'-phosphomonoester.</text>
        <dbReference type="EC" id="3.1.26.3"/>
    </reaction>
</comment>
<comment type="cofactor">
    <cofactor evidence="1">
        <name>Mg(2+)</name>
        <dbReference type="ChEBI" id="CHEBI:18420"/>
    </cofactor>
</comment>
<comment type="subunit">
    <text evidence="1">Homodimer.</text>
</comment>
<comment type="subcellular location">
    <subcellularLocation>
        <location evidence="1">Cytoplasm</location>
    </subcellularLocation>
</comment>
<comment type="similarity">
    <text evidence="4">Belongs to the ribonuclease III family.</text>
</comment>